<sequence>MNCMFHQMQKRSTNTCCQNLQKILDHLILLQTIHSPVFRLDRMQLRQMQTLACLWIHQHNHDHQVMLGAIKWISPLIKQ</sequence>
<organismHost>
    <name type="scientific">Oryctolagus cuniculus</name>
    <name type="common">Rabbit</name>
    <dbReference type="NCBI Taxonomy" id="9986"/>
</organismHost>
<reference key="1">
    <citation type="journal article" date="1989" name="Virology">
        <title>Evidence of duplication and deletion in super short segment 11 of rabbit rotavirus Alabama strain.</title>
        <authorList>
            <person name="Gorziglia M."/>
            <person name="Nishikawa K."/>
            <person name="Fukuhara N."/>
        </authorList>
    </citation>
    <scope>NUCLEOTIDE SEQUENCE [GENOMIC DNA]</scope>
</reference>
<proteinExistence type="inferred from homology"/>
<name>NSP6_ROTRA</name>
<keyword id="KW-1035">Host cytoplasm</keyword>
<keyword id="KW-1045">Host mitochondrion</keyword>
<evidence type="ECO:0000255" key="1">
    <source>
        <dbReference type="HAMAP-Rule" id="MF_04093"/>
    </source>
</evidence>
<dbReference type="EMBL" id="J04361">
    <property type="protein sequence ID" value="AAA66884.1"/>
    <property type="status" value="ALT_SEQ"/>
    <property type="molecule type" value="Genomic_DNA"/>
</dbReference>
<dbReference type="PIR" id="B30233">
    <property type="entry name" value="B30233"/>
</dbReference>
<dbReference type="SMR" id="Q85424"/>
<dbReference type="GO" id="GO:0033650">
    <property type="term" value="C:host cell mitochondrion"/>
    <property type="evidence" value="ECO:0007669"/>
    <property type="project" value="UniProtKB-SubCell"/>
</dbReference>
<dbReference type="HAMAP" id="MF_04093">
    <property type="entry name" value="ROTA_NSP6"/>
    <property type="match status" value="1"/>
</dbReference>
<dbReference type="InterPro" id="IPR006950">
    <property type="entry name" value="Rotavirus_NSP6"/>
</dbReference>
<dbReference type="Pfam" id="PF04866">
    <property type="entry name" value="Rota_NS6"/>
    <property type="match status" value="1"/>
</dbReference>
<organism>
    <name type="scientific">Rotavirus A (strain RVA/Rabbit/United States/ALA/XXXX/G3P11[14])</name>
    <name type="common">RV-A</name>
    <name type="synonym">Rotavirus A (strain Alabama)</name>
    <dbReference type="NCBI Taxonomy" id="101359"/>
    <lineage>
        <taxon>Viruses</taxon>
        <taxon>Riboviria</taxon>
        <taxon>Orthornavirae</taxon>
        <taxon>Duplornaviricota</taxon>
        <taxon>Resentoviricetes</taxon>
        <taxon>Reovirales</taxon>
        <taxon>Sedoreoviridae</taxon>
        <taxon>Rotavirus</taxon>
        <taxon>Rotavirus A</taxon>
    </lineage>
</organism>
<comment type="subunit">
    <text evidence="1">Interacts with NSP2 and NSP5.</text>
</comment>
<comment type="subcellular location">
    <subcellularLocation>
        <location evidence="1">Host cytoplasm</location>
    </subcellularLocation>
    <subcellularLocation>
        <location evidence="1">Host mitochondrion</location>
    </subcellularLocation>
    <text evidence="1">Found in spherical cytoplasmic structures, called viral factories, that appear early after infection and are the site of viral replication and packaging.</text>
</comment>
<comment type="similarity">
    <text evidence="1">Belongs to the rotavirus A NSP6 family.</text>
</comment>
<comment type="sequence caution">
    <conflict type="erroneous gene model prediction">
        <sequence resource="EMBL-CDS" id="AAA66884"/>
    </conflict>
</comment>
<protein>
    <recommendedName>
        <fullName evidence="1">Non-structural protein 6</fullName>
        <shortName evidence="1">NSP6</shortName>
    </recommendedName>
</protein>
<feature type="chain" id="PRO_0000369527" description="Non-structural protein 6">
    <location>
        <begin position="1"/>
        <end position="79"/>
    </location>
</feature>
<accession>Q85424</accession>